<dbReference type="EMBL" id="U34205">
    <property type="protein sequence ID" value="AAB05670.1"/>
    <property type="molecule type" value="Genomic_DNA"/>
</dbReference>
<dbReference type="PIR" id="T14522">
    <property type="entry name" value="T14522"/>
</dbReference>
<dbReference type="SMR" id="Q31909"/>
<dbReference type="GO" id="GO:0009535">
    <property type="term" value="C:chloroplast thylakoid membrane"/>
    <property type="evidence" value="ECO:0007669"/>
    <property type="project" value="UniProtKB-SubCell"/>
</dbReference>
<dbReference type="GO" id="GO:0009522">
    <property type="term" value="C:photosystem I"/>
    <property type="evidence" value="ECO:0007669"/>
    <property type="project" value="UniProtKB-KW"/>
</dbReference>
<dbReference type="GO" id="GO:0015979">
    <property type="term" value="P:photosynthesis"/>
    <property type="evidence" value="ECO:0007669"/>
    <property type="project" value="UniProtKB-UniRule"/>
</dbReference>
<dbReference type="HAMAP" id="MF_00431">
    <property type="entry name" value="PSI_PsaI"/>
    <property type="match status" value="1"/>
</dbReference>
<dbReference type="InterPro" id="IPR001302">
    <property type="entry name" value="PSI_PsaI"/>
</dbReference>
<dbReference type="InterPro" id="IPR036357">
    <property type="entry name" value="PSI_PsaI_sf"/>
</dbReference>
<dbReference type="NCBIfam" id="TIGR03052">
    <property type="entry name" value="PS_I_psaI"/>
    <property type="match status" value="1"/>
</dbReference>
<dbReference type="PANTHER" id="PTHR35775">
    <property type="match status" value="1"/>
</dbReference>
<dbReference type="PANTHER" id="PTHR35775:SF2">
    <property type="entry name" value="PHOTOSYSTEM I REACTION CENTER SUBUNIT VIII"/>
    <property type="match status" value="1"/>
</dbReference>
<dbReference type="Pfam" id="PF00796">
    <property type="entry name" value="PSI_8"/>
    <property type="match status" value="1"/>
</dbReference>
<dbReference type="SUPFAM" id="SSF81540">
    <property type="entry name" value="Subunit VIII of photosystem I reaction centre, PsaI"/>
    <property type="match status" value="1"/>
</dbReference>
<protein>
    <recommendedName>
        <fullName evidence="1">Photosystem I reaction center subunit VIII</fullName>
        <shortName evidence="1">PSI-I</shortName>
    </recommendedName>
</protein>
<evidence type="ECO:0000255" key="1">
    <source>
        <dbReference type="HAMAP-Rule" id="MF_00431"/>
    </source>
</evidence>
<feature type="chain" id="PRO_0000194645" description="Photosystem I reaction center subunit VIII">
    <location>
        <begin position="1"/>
        <end position="36"/>
    </location>
</feature>
<feature type="transmembrane region" description="Helical" evidence="1">
    <location>
        <begin position="8"/>
        <end position="28"/>
    </location>
</feature>
<reference key="1">
    <citation type="submission" date="1996-08" db="EMBL/GenBank/DDBJ databases">
        <title>The Brassica psaI and ORF185 genes are linked, co-transcribed and light-regulated.</title>
        <authorList>
            <person name="Stange J.L."/>
            <person name="Dzelzkalns V.A."/>
        </authorList>
    </citation>
    <scope>NUCLEOTIDE SEQUENCE [GENOMIC DNA]</scope>
    <source>
        <tissue>Leaf</tissue>
    </source>
</reference>
<proteinExistence type="inferred from homology"/>
<geneLocation type="chloroplast"/>
<keyword id="KW-0150">Chloroplast</keyword>
<keyword id="KW-0472">Membrane</keyword>
<keyword id="KW-0602">Photosynthesis</keyword>
<keyword id="KW-0603">Photosystem I</keyword>
<keyword id="KW-0934">Plastid</keyword>
<keyword id="KW-0793">Thylakoid</keyword>
<keyword id="KW-0812">Transmembrane</keyword>
<keyword id="KW-1133">Transmembrane helix</keyword>
<sequence length="36" mass="3937">MTNLNLPSLFVPLVGLVFPAIAMASLFLHVQKNKIV</sequence>
<name>PSAI_BRAOL</name>
<comment type="function">
    <text evidence="1">May help in the organization of the PsaL subunit.</text>
</comment>
<comment type="subcellular location">
    <subcellularLocation>
        <location evidence="1">Plastid</location>
        <location evidence="1">Chloroplast thylakoid membrane</location>
        <topology evidence="1">Single-pass membrane protein</topology>
    </subcellularLocation>
</comment>
<comment type="similarity">
    <text evidence="1">Belongs to the PsaI family.</text>
</comment>
<accession>Q31909</accession>
<organism>
    <name type="scientific">Brassica oleracea</name>
    <name type="common">Wild cabbage</name>
    <dbReference type="NCBI Taxonomy" id="3712"/>
    <lineage>
        <taxon>Eukaryota</taxon>
        <taxon>Viridiplantae</taxon>
        <taxon>Streptophyta</taxon>
        <taxon>Embryophyta</taxon>
        <taxon>Tracheophyta</taxon>
        <taxon>Spermatophyta</taxon>
        <taxon>Magnoliopsida</taxon>
        <taxon>eudicotyledons</taxon>
        <taxon>Gunneridae</taxon>
        <taxon>Pentapetalae</taxon>
        <taxon>rosids</taxon>
        <taxon>malvids</taxon>
        <taxon>Brassicales</taxon>
        <taxon>Brassicaceae</taxon>
        <taxon>Brassiceae</taxon>
        <taxon>Brassica</taxon>
    </lineage>
</organism>
<gene>
    <name evidence="1" type="primary">psaI</name>
</gene>